<keyword id="KW-0025">Alternative splicing</keyword>
<keyword id="KW-0106">Calcium</keyword>
<keyword id="KW-1015">Disulfide bond</keyword>
<keyword id="KW-0430">Lectin</keyword>
<keyword id="KW-0479">Metal-binding</keyword>
<keyword id="KW-1267">Proteomics identification</keyword>
<keyword id="KW-1185">Reference proteome</keyword>
<keyword id="KW-0964">Secreted</keyword>
<keyword id="KW-0732">Signal</keyword>
<evidence type="ECO:0000250" key="1"/>
<evidence type="ECO:0000250" key="2">
    <source>
        <dbReference type="UniProtKB" id="Q8WWA0"/>
    </source>
</evidence>
<evidence type="ECO:0000255" key="3"/>
<evidence type="ECO:0000255" key="4">
    <source>
        <dbReference type="PROSITE-ProRule" id="PRU00739"/>
    </source>
</evidence>
<evidence type="ECO:0000269" key="5">
    <source>
    </source>
</evidence>
<evidence type="ECO:0000269" key="6">
    <source>
    </source>
</evidence>
<evidence type="ECO:0000303" key="7">
    <source>
    </source>
</evidence>
<evidence type="ECO:0000305" key="8"/>
<gene>
    <name type="primary">ITLN2</name>
    <name type="ORF">UNQ2789/PRO7179</name>
</gene>
<proteinExistence type="evidence at protein level"/>
<protein>
    <recommendedName>
        <fullName>Intelectin-2</fullName>
    </recommendedName>
    <alternativeName>
        <fullName>Endothelial lectin HL-2</fullName>
    </alternativeName>
</protein>
<sequence>MLSMLRTMTRLCFLLFFSVATSGCSAAAASSLEMLSREFETCAFSFSSLPRSCKEIKERCHSAGDGLYFLRTKNGVVYQTFCDMTSGGGGWTLVASVHENDMRGKCTVGDRWSSQQGNKADYPEGDGNWANYNTFGSAEAATSDDYKNPGYYDIQAKDLGIWHVPNKSPMQHWRNSALLRYRTNTGFLQRLGHNLFGIYQKYPVKYRSGKCWNDNGPAIPVVYDFGDAKKTASYYSPYGQREFVAGFVQFRVFNNERAANALCAGIKVTGCNTEHHCIGGGGFFPQGKPRQCGDFSAFDWDGYGTHVKSSCSREITEAAVLLFYR</sequence>
<accession>Q8WWU7</accession>
<accession>Q17RR2</accession>
<accession>Q5VYI0</accession>
<dbReference type="EMBL" id="AY065973">
    <property type="protein sequence ID" value="AAL58074.1"/>
    <property type="molecule type" value="mRNA"/>
</dbReference>
<dbReference type="EMBL" id="AY358905">
    <property type="protein sequence ID" value="AAQ89264.1"/>
    <property type="molecule type" value="mRNA"/>
</dbReference>
<dbReference type="EMBL" id="AL354714">
    <property type="status" value="NOT_ANNOTATED_CDS"/>
    <property type="molecule type" value="Genomic_DNA"/>
</dbReference>
<dbReference type="EMBL" id="AL591806">
    <property type="status" value="NOT_ANNOTATED_CDS"/>
    <property type="molecule type" value="Genomic_DNA"/>
</dbReference>
<dbReference type="EMBL" id="CH471121">
    <property type="protein sequence ID" value="EAW52685.1"/>
    <property type="molecule type" value="Genomic_DNA"/>
</dbReference>
<dbReference type="EMBL" id="BC117225">
    <property type="protein sequence ID" value="AAI17226.1"/>
    <property type="molecule type" value="mRNA"/>
</dbReference>
<dbReference type="EMBL" id="BC143341">
    <property type="protein sequence ID" value="AAI43342.1"/>
    <property type="molecule type" value="mRNA"/>
</dbReference>
<dbReference type="CCDS" id="CCDS1212.1">
    <molecule id="Q8WWU7-1"/>
</dbReference>
<dbReference type="RefSeq" id="NP_543154.1">
    <molecule id="Q8WWU7-1"/>
    <property type="nucleotide sequence ID" value="NM_080878.3"/>
</dbReference>
<dbReference type="RefSeq" id="XP_011507512.1">
    <property type="nucleotide sequence ID" value="XM_011509210.1"/>
</dbReference>
<dbReference type="RefSeq" id="XP_011507513.1">
    <property type="nucleotide sequence ID" value="XM_011509211.1"/>
</dbReference>
<dbReference type="RefSeq" id="XP_024309089.1">
    <molecule id="Q8WWU7-2"/>
    <property type="nucleotide sequence ID" value="XM_024453321.2"/>
</dbReference>
<dbReference type="SMR" id="Q8WWU7"/>
<dbReference type="BioGRID" id="126772">
    <property type="interactions" value="62"/>
</dbReference>
<dbReference type="FunCoup" id="Q8WWU7">
    <property type="interactions" value="227"/>
</dbReference>
<dbReference type="IntAct" id="Q8WWU7">
    <property type="interactions" value="56"/>
</dbReference>
<dbReference type="STRING" id="9606.ENSP00000357008"/>
<dbReference type="iPTMnet" id="Q8WWU7"/>
<dbReference type="PhosphoSitePlus" id="Q8WWU7"/>
<dbReference type="BioMuta" id="ITLN2"/>
<dbReference type="DMDM" id="55976554"/>
<dbReference type="MassIVE" id="Q8WWU7"/>
<dbReference type="PaxDb" id="9606-ENSP00000357008"/>
<dbReference type="PeptideAtlas" id="Q8WWU7"/>
<dbReference type="ProteomicsDB" id="74936">
    <molecule id="Q8WWU7-1"/>
</dbReference>
<dbReference type="Antibodypedia" id="1671">
    <property type="antibodies" value="102 antibodies from 21 providers"/>
</dbReference>
<dbReference type="DNASU" id="142683"/>
<dbReference type="Ensembl" id="ENST00000368029.4">
    <molecule id="Q8WWU7-1"/>
    <property type="protein sequence ID" value="ENSP00000357008.3"/>
    <property type="gene ID" value="ENSG00000158764.7"/>
</dbReference>
<dbReference type="GeneID" id="142683"/>
<dbReference type="KEGG" id="hsa:142683"/>
<dbReference type="MANE-Select" id="ENST00000368029.4">
    <property type="protein sequence ID" value="ENSP00000357008.3"/>
    <property type="RefSeq nucleotide sequence ID" value="NM_080878.3"/>
    <property type="RefSeq protein sequence ID" value="NP_543154.1"/>
</dbReference>
<dbReference type="UCSC" id="uc001fxd.4">
    <molecule id="Q8WWU7-1"/>
    <property type="organism name" value="human"/>
</dbReference>
<dbReference type="AGR" id="HGNC:20599"/>
<dbReference type="CTD" id="142683"/>
<dbReference type="DisGeNET" id="142683"/>
<dbReference type="GeneCards" id="ITLN2"/>
<dbReference type="HGNC" id="HGNC:20599">
    <property type="gene designation" value="ITLN2"/>
</dbReference>
<dbReference type="HPA" id="ENSG00000158764">
    <property type="expression patterns" value="Tissue enriched (intestine)"/>
</dbReference>
<dbReference type="MIM" id="609874">
    <property type="type" value="gene"/>
</dbReference>
<dbReference type="neXtProt" id="NX_Q8WWU7"/>
<dbReference type="OpenTargets" id="ENSG00000158764"/>
<dbReference type="PharmGKB" id="PA134879128"/>
<dbReference type="VEuPathDB" id="HostDB:ENSG00000158764"/>
<dbReference type="eggNOG" id="ENOG502QU6C">
    <property type="taxonomic scope" value="Eukaryota"/>
</dbReference>
<dbReference type="GeneTree" id="ENSGT00940000163851"/>
<dbReference type="HOGENOM" id="CLU_066147_0_0_1"/>
<dbReference type="InParanoid" id="Q8WWU7"/>
<dbReference type="OMA" id="NYVASSC"/>
<dbReference type="OrthoDB" id="5971203at2759"/>
<dbReference type="PAN-GO" id="Q8WWU7">
    <property type="GO annotations" value="2 GO annotations based on evolutionary models"/>
</dbReference>
<dbReference type="PhylomeDB" id="Q8WWU7"/>
<dbReference type="TreeFam" id="TF328530"/>
<dbReference type="PathwayCommons" id="Q8WWU7"/>
<dbReference type="SignaLink" id="Q8WWU7"/>
<dbReference type="BioGRID-ORCS" id="142683">
    <property type="hits" value="12 hits in 1137 CRISPR screens"/>
</dbReference>
<dbReference type="ChiTaRS" id="ITLN2">
    <property type="organism name" value="human"/>
</dbReference>
<dbReference type="GenomeRNAi" id="142683"/>
<dbReference type="Pharos" id="Q8WWU7">
    <property type="development level" value="Tbio"/>
</dbReference>
<dbReference type="PRO" id="PR:Q8WWU7"/>
<dbReference type="Proteomes" id="UP000005640">
    <property type="component" value="Chromosome 1"/>
</dbReference>
<dbReference type="RNAct" id="Q8WWU7">
    <property type="molecule type" value="protein"/>
</dbReference>
<dbReference type="Bgee" id="ENSG00000158764">
    <property type="expression patterns" value="Expressed in duodenum and 67 other cell types or tissues"/>
</dbReference>
<dbReference type="GO" id="GO:0005615">
    <property type="term" value="C:extracellular space"/>
    <property type="evidence" value="ECO:0000318"/>
    <property type="project" value="GO_Central"/>
</dbReference>
<dbReference type="GO" id="GO:0046872">
    <property type="term" value="F:metal ion binding"/>
    <property type="evidence" value="ECO:0007669"/>
    <property type="project" value="UniProtKB-KW"/>
</dbReference>
<dbReference type="GO" id="GO:0070492">
    <property type="term" value="F:oligosaccharide binding"/>
    <property type="evidence" value="ECO:0000318"/>
    <property type="project" value="GO_Central"/>
</dbReference>
<dbReference type="FunFam" id="3.90.215.10:FF:000011">
    <property type="entry name" value="Intelectin 1"/>
    <property type="match status" value="1"/>
</dbReference>
<dbReference type="Gene3D" id="3.90.215.10">
    <property type="entry name" value="Gamma Fibrinogen, chain A, domain 1"/>
    <property type="match status" value="1"/>
</dbReference>
<dbReference type="InterPro" id="IPR036056">
    <property type="entry name" value="Fibrinogen-like_C"/>
</dbReference>
<dbReference type="InterPro" id="IPR014716">
    <property type="entry name" value="Fibrinogen_a/b/g_C_1"/>
</dbReference>
<dbReference type="InterPro" id="IPR002181">
    <property type="entry name" value="Fibrinogen_a/b/g_C_dom"/>
</dbReference>
<dbReference type="NCBIfam" id="NF040941">
    <property type="entry name" value="GGGWT_bact"/>
    <property type="match status" value="1"/>
</dbReference>
<dbReference type="PANTHER" id="PTHR16146">
    <property type="entry name" value="INTELECTIN"/>
    <property type="match status" value="1"/>
</dbReference>
<dbReference type="PANTHER" id="PTHR16146:SF21">
    <property type="entry name" value="INTELECTIN-2"/>
    <property type="match status" value="1"/>
</dbReference>
<dbReference type="SUPFAM" id="SSF56496">
    <property type="entry name" value="Fibrinogen C-terminal domain-like"/>
    <property type="match status" value="1"/>
</dbReference>
<dbReference type="PROSITE" id="PS51406">
    <property type="entry name" value="FIBRINOGEN_C_2"/>
    <property type="match status" value="1"/>
</dbReference>
<name>ITLN2_HUMAN</name>
<reference key="1">
    <citation type="journal article" date="2001" name="Glycobiology">
        <title>Human homologs of the Xenopus oocyte cortical granule lectin XL35.</title>
        <authorList>
            <person name="Lee J.K."/>
            <person name="Schnee J."/>
            <person name="Pang M."/>
            <person name="Wolfert M."/>
            <person name="Baum L.G."/>
            <person name="Moremen K.W."/>
            <person name="Pierce M."/>
        </authorList>
    </citation>
    <scope>NUCLEOTIDE SEQUENCE [MRNA] (ISOFORM 1)</scope>
    <scope>TISSUE SPECIFICITY</scope>
    <source>
        <tissue>Small intestine</tissue>
    </source>
</reference>
<reference key="2">
    <citation type="journal article" date="2003" name="Genome Res.">
        <title>The secreted protein discovery initiative (SPDI), a large-scale effort to identify novel human secreted and transmembrane proteins: a bioinformatics assessment.</title>
        <authorList>
            <person name="Clark H.F."/>
            <person name="Gurney A.L."/>
            <person name="Abaya E."/>
            <person name="Baker K."/>
            <person name="Baldwin D.T."/>
            <person name="Brush J."/>
            <person name="Chen J."/>
            <person name="Chow B."/>
            <person name="Chui C."/>
            <person name="Crowley C."/>
            <person name="Currell B."/>
            <person name="Deuel B."/>
            <person name="Dowd P."/>
            <person name="Eaton D."/>
            <person name="Foster J.S."/>
            <person name="Grimaldi C."/>
            <person name="Gu Q."/>
            <person name="Hass P.E."/>
            <person name="Heldens S."/>
            <person name="Huang A."/>
            <person name="Kim H.S."/>
            <person name="Klimowski L."/>
            <person name="Jin Y."/>
            <person name="Johnson S."/>
            <person name="Lee J."/>
            <person name="Lewis L."/>
            <person name="Liao D."/>
            <person name="Mark M.R."/>
            <person name="Robbie E."/>
            <person name="Sanchez C."/>
            <person name="Schoenfeld J."/>
            <person name="Seshagiri S."/>
            <person name="Simmons L."/>
            <person name="Singh J."/>
            <person name="Smith V."/>
            <person name="Stinson J."/>
            <person name="Vagts A."/>
            <person name="Vandlen R.L."/>
            <person name="Watanabe C."/>
            <person name="Wieand D."/>
            <person name="Woods K."/>
            <person name="Xie M.-H."/>
            <person name="Yansura D.G."/>
            <person name="Yi S."/>
            <person name="Yu G."/>
            <person name="Yuan J."/>
            <person name="Zhang M."/>
            <person name="Zhang Z."/>
            <person name="Goddard A.D."/>
            <person name="Wood W.I."/>
            <person name="Godowski P.J."/>
            <person name="Gray A.M."/>
        </authorList>
    </citation>
    <scope>NUCLEOTIDE SEQUENCE [LARGE SCALE MRNA] (ISOFORM 1)</scope>
</reference>
<reference key="3">
    <citation type="journal article" date="2006" name="Nature">
        <title>The DNA sequence and biological annotation of human chromosome 1.</title>
        <authorList>
            <person name="Gregory S.G."/>
            <person name="Barlow K.F."/>
            <person name="McLay K.E."/>
            <person name="Kaul R."/>
            <person name="Swarbreck D."/>
            <person name="Dunham A."/>
            <person name="Scott C.E."/>
            <person name="Howe K.L."/>
            <person name="Woodfine K."/>
            <person name="Spencer C.C.A."/>
            <person name="Jones M.C."/>
            <person name="Gillson C."/>
            <person name="Searle S."/>
            <person name="Zhou Y."/>
            <person name="Kokocinski F."/>
            <person name="McDonald L."/>
            <person name="Evans R."/>
            <person name="Phillips K."/>
            <person name="Atkinson A."/>
            <person name="Cooper R."/>
            <person name="Jones C."/>
            <person name="Hall R.E."/>
            <person name="Andrews T.D."/>
            <person name="Lloyd C."/>
            <person name="Ainscough R."/>
            <person name="Almeida J.P."/>
            <person name="Ambrose K.D."/>
            <person name="Anderson F."/>
            <person name="Andrew R.W."/>
            <person name="Ashwell R.I.S."/>
            <person name="Aubin K."/>
            <person name="Babbage A.K."/>
            <person name="Bagguley C.L."/>
            <person name="Bailey J."/>
            <person name="Beasley H."/>
            <person name="Bethel G."/>
            <person name="Bird C.P."/>
            <person name="Bray-Allen S."/>
            <person name="Brown J.Y."/>
            <person name="Brown A.J."/>
            <person name="Buckley D."/>
            <person name="Burton J."/>
            <person name="Bye J."/>
            <person name="Carder C."/>
            <person name="Chapman J.C."/>
            <person name="Clark S.Y."/>
            <person name="Clarke G."/>
            <person name="Clee C."/>
            <person name="Cobley V."/>
            <person name="Collier R.E."/>
            <person name="Corby N."/>
            <person name="Coville G.J."/>
            <person name="Davies J."/>
            <person name="Deadman R."/>
            <person name="Dunn M."/>
            <person name="Earthrowl M."/>
            <person name="Ellington A.G."/>
            <person name="Errington H."/>
            <person name="Frankish A."/>
            <person name="Frankland J."/>
            <person name="French L."/>
            <person name="Garner P."/>
            <person name="Garnett J."/>
            <person name="Gay L."/>
            <person name="Ghori M.R.J."/>
            <person name="Gibson R."/>
            <person name="Gilby L.M."/>
            <person name="Gillett W."/>
            <person name="Glithero R.J."/>
            <person name="Grafham D.V."/>
            <person name="Griffiths C."/>
            <person name="Griffiths-Jones S."/>
            <person name="Grocock R."/>
            <person name="Hammond S."/>
            <person name="Harrison E.S.I."/>
            <person name="Hart E."/>
            <person name="Haugen E."/>
            <person name="Heath P.D."/>
            <person name="Holmes S."/>
            <person name="Holt K."/>
            <person name="Howden P.J."/>
            <person name="Hunt A.R."/>
            <person name="Hunt S.E."/>
            <person name="Hunter G."/>
            <person name="Isherwood J."/>
            <person name="James R."/>
            <person name="Johnson C."/>
            <person name="Johnson D."/>
            <person name="Joy A."/>
            <person name="Kay M."/>
            <person name="Kershaw J.K."/>
            <person name="Kibukawa M."/>
            <person name="Kimberley A.M."/>
            <person name="King A."/>
            <person name="Knights A.J."/>
            <person name="Lad H."/>
            <person name="Laird G."/>
            <person name="Lawlor S."/>
            <person name="Leongamornlert D.A."/>
            <person name="Lloyd D.M."/>
            <person name="Loveland J."/>
            <person name="Lovell J."/>
            <person name="Lush M.J."/>
            <person name="Lyne R."/>
            <person name="Martin S."/>
            <person name="Mashreghi-Mohammadi M."/>
            <person name="Matthews L."/>
            <person name="Matthews N.S.W."/>
            <person name="McLaren S."/>
            <person name="Milne S."/>
            <person name="Mistry S."/>
            <person name="Moore M.J.F."/>
            <person name="Nickerson T."/>
            <person name="O'Dell C.N."/>
            <person name="Oliver K."/>
            <person name="Palmeiri A."/>
            <person name="Palmer S.A."/>
            <person name="Parker A."/>
            <person name="Patel D."/>
            <person name="Pearce A.V."/>
            <person name="Peck A.I."/>
            <person name="Pelan S."/>
            <person name="Phelps K."/>
            <person name="Phillimore B.J."/>
            <person name="Plumb R."/>
            <person name="Rajan J."/>
            <person name="Raymond C."/>
            <person name="Rouse G."/>
            <person name="Saenphimmachak C."/>
            <person name="Sehra H.K."/>
            <person name="Sheridan E."/>
            <person name="Shownkeen R."/>
            <person name="Sims S."/>
            <person name="Skuce C.D."/>
            <person name="Smith M."/>
            <person name="Steward C."/>
            <person name="Subramanian S."/>
            <person name="Sycamore N."/>
            <person name="Tracey A."/>
            <person name="Tromans A."/>
            <person name="Van Helmond Z."/>
            <person name="Wall M."/>
            <person name="Wallis J.M."/>
            <person name="White S."/>
            <person name="Whitehead S.L."/>
            <person name="Wilkinson J.E."/>
            <person name="Willey D.L."/>
            <person name="Williams H."/>
            <person name="Wilming L."/>
            <person name="Wray P.W."/>
            <person name="Wu Z."/>
            <person name="Coulson A."/>
            <person name="Vaudin M."/>
            <person name="Sulston J.E."/>
            <person name="Durbin R.M."/>
            <person name="Hubbard T."/>
            <person name="Wooster R."/>
            <person name="Dunham I."/>
            <person name="Carter N.P."/>
            <person name="McVean G."/>
            <person name="Ross M.T."/>
            <person name="Harrow J."/>
            <person name="Olson M.V."/>
            <person name="Beck S."/>
            <person name="Rogers J."/>
            <person name="Bentley D.R."/>
        </authorList>
    </citation>
    <scope>NUCLEOTIDE SEQUENCE [LARGE SCALE GENOMIC DNA]</scope>
</reference>
<reference key="4">
    <citation type="submission" date="2005-09" db="EMBL/GenBank/DDBJ databases">
        <authorList>
            <person name="Mural R.J."/>
            <person name="Istrail S."/>
            <person name="Sutton G.G."/>
            <person name="Florea L."/>
            <person name="Halpern A.L."/>
            <person name="Mobarry C.M."/>
            <person name="Lippert R."/>
            <person name="Walenz B."/>
            <person name="Shatkay H."/>
            <person name="Dew I."/>
            <person name="Miller J.R."/>
            <person name="Flanigan M.J."/>
            <person name="Edwards N.J."/>
            <person name="Bolanos R."/>
            <person name="Fasulo D."/>
            <person name="Halldorsson B.V."/>
            <person name="Hannenhalli S."/>
            <person name="Turner R."/>
            <person name="Yooseph S."/>
            <person name="Lu F."/>
            <person name="Nusskern D.R."/>
            <person name="Shue B.C."/>
            <person name="Zheng X.H."/>
            <person name="Zhong F."/>
            <person name="Delcher A.L."/>
            <person name="Huson D.H."/>
            <person name="Kravitz S.A."/>
            <person name="Mouchard L."/>
            <person name="Reinert K."/>
            <person name="Remington K.A."/>
            <person name="Clark A.G."/>
            <person name="Waterman M.S."/>
            <person name="Eichler E.E."/>
            <person name="Adams M.D."/>
            <person name="Hunkapiller M.W."/>
            <person name="Myers E.W."/>
            <person name="Venter J.C."/>
        </authorList>
    </citation>
    <scope>NUCLEOTIDE SEQUENCE [LARGE SCALE GENOMIC DNA]</scope>
</reference>
<reference key="5">
    <citation type="journal article" date="2004" name="Genome Res.">
        <title>The status, quality, and expansion of the NIH full-length cDNA project: the Mammalian Gene Collection (MGC).</title>
        <authorList>
            <consortium name="The MGC Project Team"/>
        </authorList>
    </citation>
    <scope>NUCLEOTIDE SEQUENCE [LARGE SCALE MRNA] (ISOFORM 2)</scope>
    <scope>VARIANT HIS-103</scope>
    <source>
        <tissue>Brain</tissue>
    </source>
</reference>
<comment type="function">
    <text evidence="1">May play a role in the defense system against pathogens.</text>
</comment>
<comment type="interaction">
    <interactant intactId="EBI-21798491">
        <id>Q8WWU7</id>
    </interactant>
    <interactant intactId="EBI-9369928">
        <id>Q14249</id>
        <label>ENDOG</label>
    </interactant>
    <organismsDiffer>false</organismsDiffer>
    <experiments>3</experiments>
</comment>
<comment type="subcellular location">
    <subcellularLocation>
        <location evidence="8">Secreted</location>
    </subcellularLocation>
</comment>
<comment type="alternative products">
    <event type="alternative splicing"/>
    <isoform>
        <id>Q8WWU7-1</id>
        <name>1</name>
        <sequence type="displayed"/>
    </isoform>
    <isoform>
        <id>Q8WWU7-2</id>
        <name>2</name>
        <sequence type="described" ref="VSP_055093"/>
    </isoform>
</comment>
<comment type="tissue specificity">
    <text evidence="5">Expressed only in the small intestine.</text>
</comment>
<organism>
    <name type="scientific">Homo sapiens</name>
    <name type="common">Human</name>
    <dbReference type="NCBI Taxonomy" id="9606"/>
    <lineage>
        <taxon>Eukaryota</taxon>
        <taxon>Metazoa</taxon>
        <taxon>Chordata</taxon>
        <taxon>Craniata</taxon>
        <taxon>Vertebrata</taxon>
        <taxon>Euteleostomi</taxon>
        <taxon>Mammalia</taxon>
        <taxon>Eutheria</taxon>
        <taxon>Euarchontoglires</taxon>
        <taxon>Primates</taxon>
        <taxon>Haplorrhini</taxon>
        <taxon>Catarrhini</taxon>
        <taxon>Hominidae</taxon>
        <taxon>Homo</taxon>
    </lineage>
</organism>
<feature type="signal peptide" evidence="3">
    <location>
        <begin position="1"/>
        <end position="26"/>
    </location>
</feature>
<feature type="chain" id="PRO_0000009149" description="Intelectin-2">
    <location>
        <begin position="27"/>
        <end position="325"/>
    </location>
</feature>
<feature type="domain" description="Fibrinogen C-terminal" evidence="4">
    <location>
        <begin position="44"/>
        <end position="267"/>
    </location>
</feature>
<feature type="binding site" evidence="2">
    <location>
        <position position="98"/>
    </location>
    <ligand>
        <name>Ca(2+)</name>
        <dbReference type="ChEBI" id="CHEBI:29108"/>
        <label>1</label>
    </ligand>
</feature>
<feature type="binding site" evidence="2">
    <location>
        <position position="99"/>
    </location>
    <ligand>
        <name>Ca(2+)</name>
        <dbReference type="ChEBI" id="CHEBI:29108"/>
        <label>2</label>
    </ligand>
</feature>
<feature type="binding site" evidence="2">
    <location>
        <position position="101"/>
    </location>
    <ligand>
        <name>Ca(2+)</name>
        <dbReference type="ChEBI" id="CHEBI:29108"/>
        <label>2</label>
    </ligand>
</feature>
<feature type="binding site" evidence="2">
    <location>
        <position position="104"/>
    </location>
    <ligand>
        <name>Ca(2+)</name>
        <dbReference type="ChEBI" id="CHEBI:29108"/>
        <label>2</label>
    </ligand>
</feature>
<feature type="binding site" evidence="2">
    <location>
        <position position="109"/>
    </location>
    <ligand>
        <name>Ca(2+)</name>
        <dbReference type="ChEBI" id="CHEBI:29108"/>
        <label>1</label>
    </ligand>
</feature>
<feature type="binding site" evidence="2">
    <location>
        <position position="110"/>
    </location>
    <ligand>
        <name>Ca(2+)</name>
        <dbReference type="ChEBI" id="CHEBI:29108"/>
        <label>2</label>
    </ligand>
</feature>
<feature type="binding site" evidence="2">
    <location>
        <position position="145"/>
    </location>
    <ligand>
        <name>Ca(2+)</name>
        <dbReference type="ChEBI" id="CHEBI:29108"/>
        <label>1</label>
    </ligand>
</feature>
<feature type="binding site" evidence="2">
    <location>
        <position position="272"/>
    </location>
    <ligand>
        <name>Ca(2+)</name>
        <dbReference type="ChEBI" id="CHEBI:29108"/>
        <label>3</label>
    </ligand>
</feature>
<feature type="binding site" evidence="2">
    <location>
        <begin position="274"/>
        <end position="275"/>
    </location>
    <ligand>
        <name>a carbohydrate</name>
        <dbReference type="ChEBI" id="CHEBI:16646"/>
    </ligand>
</feature>
<feature type="binding site" evidence="2">
    <location>
        <position position="274"/>
    </location>
    <ligand>
        <name>Ca(2+)</name>
        <dbReference type="ChEBI" id="CHEBI:29108"/>
        <label>3</label>
    </ligand>
</feature>
<feature type="binding site" evidence="2">
    <location>
        <position position="294"/>
    </location>
    <ligand>
        <name>Ca(2+)</name>
        <dbReference type="ChEBI" id="CHEBI:29108"/>
        <label>1</label>
    </ligand>
</feature>
<feature type="disulfide bond" evidence="2">
    <location>
        <begin position="53"/>
        <end position="82"/>
    </location>
</feature>
<feature type="disulfide bond" evidence="2">
    <location>
        <begin position="106"/>
        <end position="292"/>
    </location>
</feature>
<feature type="disulfide bond" evidence="2">
    <location>
        <begin position="211"/>
        <end position="271"/>
    </location>
</feature>
<feature type="disulfide bond" evidence="2">
    <location>
        <begin position="263"/>
        <end position="277"/>
    </location>
</feature>
<feature type="splice variant" id="VSP_055093" description="In isoform 2." evidence="7">
    <location>
        <position position="26"/>
    </location>
</feature>
<feature type="sequence variant" id="VAR_019926" description="In dbSNP:rs6680969." evidence="6">
    <original>R</original>
    <variation>H</variation>
    <location>
        <position position="103"/>
    </location>
</feature>
<feature type="sequence variant" id="VAR_049076" description="In dbSNP:rs12090411.">
    <original>Q</original>
    <variation>R</variation>
    <location>
        <position position="171"/>
    </location>
</feature>